<evidence type="ECO:0000269" key="1">
    <source>
    </source>
</evidence>
<evidence type="ECO:0000269" key="2">
    <source>
    </source>
</evidence>
<evidence type="ECO:0000269" key="3">
    <source>
    </source>
</evidence>
<evidence type="ECO:0000269" key="4">
    <source>
    </source>
</evidence>
<evidence type="ECO:0000303" key="5">
    <source>
    </source>
</evidence>
<evidence type="ECO:0000305" key="6"/>
<evidence type="ECO:0000305" key="7">
    <source>
    </source>
</evidence>
<evidence type="ECO:0000305" key="8">
    <source>
    </source>
</evidence>
<evidence type="ECO:0000312" key="9">
    <source>
        <dbReference type="EMBL" id="CCN27219.1"/>
    </source>
</evidence>
<evidence type="ECO:0000312" key="10">
    <source>
        <dbReference type="PDB" id="2M3I"/>
    </source>
</evidence>
<sequence length="37" mass="3774">FDGRNAAGNDKMSALMALTTRGCCSHPVCSAMSPICG</sequence>
<protein>
    <recommendedName>
        <fullName evidence="5">Alpha-conotoxin TxID</fullName>
    </recommendedName>
    <alternativeName>
        <fullName evidence="9">Alpha-conotoxin TxIC</fullName>
    </alternativeName>
</protein>
<dbReference type="EMBL" id="HF543950">
    <property type="protein sequence ID" value="CCN27219.1"/>
    <property type="molecule type" value="Genomic_DNA"/>
</dbReference>
<dbReference type="PDB" id="2M3I">
    <property type="method" value="NMR"/>
    <property type="chains" value="A=16-30"/>
</dbReference>
<dbReference type="PDBsum" id="2M3I"/>
<dbReference type="MetOSite" id="K8DWB5"/>
<dbReference type="GO" id="GO:0005576">
    <property type="term" value="C:extracellular region"/>
    <property type="evidence" value="ECO:0007669"/>
    <property type="project" value="UniProtKB-SubCell"/>
</dbReference>
<dbReference type="GO" id="GO:0035792">
    <property type="term" value="C:host cell postsynaptic membrane"/>
    <property type="evidence" value="ECO:0007669"/>
    <property type="project" value="UniProtKB-KW"/>
</dbReference>
<dbReference type="GO" id="GO:0030550">
    <property type="term" value="F:acetylcholine receptor inhibitor activity"/>
    <property type="evidence" value="ECO:0007669"/>
    <property type="project" value="UniProtKB-KW"/>
</dbReference>
<dbReference type="GO" id="GO:0090729">
    <property type="term" value="F:toxin activity"/>
    <property type="evidence" value="ECO:0007669"/>
    <property type="project" value="UniProtKB-KW"/>
</dbReference>
<dbReference type="InterPro" id="IPR009958">
    <property type="entry name" value="Conotoxin_a-typ"/>
</dbReference>
<dbReference type="Pfam" id="PF07365">
    <property type="entry name" value="Toxin_8"/>
    <property type="match status" value="1"/>
</dbReference>
<proteinExistence type="evidence at protein level"/>
<reference key="1">
    <citation type="journal article" date="2013" name="J. Med. Chem.">
        <title>Characterization of a novel alpha-conotoxin TxID from Conus textile that potently blocks rat alpha3beta4 nicotinic acetylcholine receptors.</title>
        <authorList>
            <person name="Luo S."/>
            <person name="Zhangsun D."/>
            <person name="Zhu X."/>
            <person name="Wu Y."/>
            <person name="Hu Y."/>
            <person name="Christensen S."/>
            <person name="Harvey P.J."/>
            <person name="Akcan M."/>
            <person name="Craik D.J."/>
            <person name="McIntosh J.M."/>
        </authorList>
    </citation>
    <scope>NUCLEOTIDE SEQUENCE [GENOMIC DNA]</scope>
    <scope>SYNTHESIS OF 22-36</scope>
    <scope>AMIDATION AT CYS-36</scope>
    <scope>STRUCTURE BY NMR OF 22-36</scope>
    <scope>DISULFIDE BONDS</scope>
</reference>
<reference key="2">
    <citation type="journal article" date="2017" name="J. Med. Chem.">
        <title>Alpha-conotoxin [S9A]TxID potently discriminates between alpha3beta4 and alpha6/alpha3beta4 nicotinic acetylcholine receptors.</title>
        <authorList>
            <person name="Wu Y."/>
            <person name="Zhangsun D."/>
            <person name="Zhu X."/>
            <person name="Kaas Q."/>
            <person name="Zhangsun M."/>
            <person name="Harvey P.J."/>
            <person name="Craik D.J."/>
            <person name="McIntosh J.M."/>
            <person name="Luo S."/>
        </authorList>
    </citation>
    <scope>MUTAGENESIS OF GLY-22; SER-25; HIS-26; PRO-27; VAL-28; SER-30; MET-32; SER-33; PRO-34 AND ILE-35</scope>
</reference>
<reference key="3">
    <citation type="journal article" date="2018" name="J. Med. Chem.">
        <title>A single amino acid substitution in alpha-conotoxin TxID reveals a specific alpha3beta4 nicotinic acetylcholine receptor antagonist.</title>
        <authorList>
            <person name="Yu J."/>
            <person name="Zhu X."/>
            <person name="Harvey P.J."/>
            <person name="Kaas Q."/>
            <person name="Zhangsun D."/>
            <person name="Craik D.J."/>
            <person name="Luo S."/>
        </authorList>
    </citation>
    <scope>MUTAGENESIS OF SER-30</scope>
    <scope>3D-STRUCTURE MODELING OF TXID IN COMPLEX WITH ALPHA-3-BETA-4 OR ALPHA-6-BETA-4</scope>
</reference>
<reference key="4">
    <citation type="journal article" date="2018" name="Mar. Drugs">
        <title>Effect of methionine oxidation and substitution of alpha-conotoxin TxID on alpha3beta4 nicotinic acetylcholine receptor.</title>
        <authorList>
            <person name="Ren J."/>
            <person name="Li R."/>
            <person name="Ning J."/>
            <person name="Zhu X."/>
            <person name="Zhangsun D."/>
            <person name="Wu Y."/>
            <person name="Luo S."/>
        </authorList>
    </citation>
    <scope>MUTAGENESIS OF MET-32</scope>
</reference>
<comment type="function">
    <text evidence="1 2 3 8">Alpha-conotoxins act on postsynaptic membranes, they bind to the nicotinic acetylcholine receptors (nAChR) and thus inhibit them. This toxin inhibits alpha-3-beta-4/CHRNA3-CHRNB4 (IC(50)=3.6-18.38 nM), alpha-6/alpha-3-beta-4 (CHRNA6/CHRNA3-CHRNB4) (IC(50)=33.9-94.1 nM), and alpha-2-beta-4/CHRNA2-CHRNB4 (IC(50)=4550 nM) nAChRs (PubMed:24200193, PubMed:28603989, PubMed:29925760). The toxin competes with agonists in the orthosteric binding site of alpha-3-beta-4/CHRNA3-CHRNB4 and alpha-6-beta-4/CHRNA6-CHRNB4 (PubMed:30252466).</text>
</comment>
<comment type="subcellular location">
    <subcellularLocation>
        <location evidence="7">Secreted</location>
    </subcellularLocation>
</comment>
<comment type="tissue specificity">
    <text evidence="7">Expressed by the venom duct.</text>
</comment>
<comment type="domain">
    <text evidence="6">The cysteine framework is I (CC-C-C). Alpha4/6 pattern.</text>
</comment>
<comment type="PTM">
    <text evidence="3">Unmodified Met-32 is essential for toxin binding to rat alpha-3-beta-4/CHRNA3-CHRNB4 nAChR. An oxidation of this methionine provokes a 13.3-fold decrease in inhibitory potency (IC(50)=245 nM instead of 18 nM). Owing to its potent activity, derivatives of this toxin have a potential in the development of a novel drug. Unfortunately, the oxidation of the methionine is readily to happen during toxin synthesis and oxidation steps as well as under oxidative environment in vivo, which should still be considered to find a solution to this major drawback.</text>
</comment>
<comment type="miscellaneous">
    <text evidence="1">Negative results: does not show inhibition at neuronal alpha-4-beta-4/CHRNA4-CHRNB4, alpha-4-beta-2/CHRNA4-CHRNB2, alpha-6/alpha-3-beta-2-beta-3 (CHRNA6/CHRNA3-CHRNB2-CHRNB3), alpha-3-beta-2/CHRNA3-CHRNB2, alpha-2-beta-2/CHRNA2-CHRNB2, alpha-9-alpha-10/CHRNA9-CHRNA10, alpha-7/CHRNA7 nAChRs and muscle alpha-1-beta-1-delta-epsilon/CHRNA1-CHRNB1-CHRND-CHRNE nAChR (PubMed:24200193).</text>
</comment>
<comment type="similarity">
    <text evidence="6">Belongs to the conotoxin A superfamily.</text>
</comment>
<comment type="online information" name="Biological Magnetic Resonance Data Bank">
    <link uri="https://bmrb.io/data_library/summary/index.php?bmrbId=18964"/>
</comment>
<feature type="propeptide" id="PRO_0000439430" evidence="6">
    <location>
        <begin position="1" status="less than"/>
        <end position="21"/>
    </location>
</feature>
<feature type="peptide" id="PRO_0000439431" description="Alpha-conotoxin TxID" evidence="7">
    <location>
        <begin position="22"/>
        <end position="36"/>
    </location>
</feature>
<feature type="modified residue" description="Cysteine amide" evidence="7">
    <location>
        <position position="36"/>
    </location>
</feature>
<feature type="disulfide bond" evidence="7 10">
    <location>
        <begin position="23"/>
        <end position="29"/>
    </location>
</feature>
<feature type="disulfide bond" evidence="7 10">
    <location>
        <begin position="24"/>
        <end position="36"/>
    </location>
</feature>
<feature type="mutagenesis site" description="17-fold and 8-fold decrease in inhibitory potency on alpha-3-beta-4/CHRNA3-CHRNB4 and alpha-6-beta-4/CHRNA6-CHRNB4 nAChRs, respectively." evidence="2">
    <original>G</original>
    <variation>A</variation>
    <location>
        <position position="22"/>
    </location>
</feature>
<feature type="mutagenesis site" description="3-fold and 2-fold decrease in inhibitory potency on alpha-3-beta-4/CHRNA3-CHRNB4 and alpha-6-beta-4/CHRNA6-CHRNB4 nAChRs, respectively." evidence="2">
    <original>S</original>
    <variation>A</variation>
    <location>
        <position position="25"/>
    </location>
</feature>
<feature type="mutagenesis site" description="Complete loss in inhibitory potency on both alpha-3-beta-4/CHRNA3-CHRNB4 and alpha-6-beta-4/CHRNA6-CHRNB4 nAChRs." evidence="2">
    <original>H</original>
    <variation>A</variation>
    <location>
        <position position="26"/>
    </location>
</feature>
<feature type="mutagenesis site" description="Complete loss in inhibitory potency on both alpha-3-beta-4/CHRNA3-CHRNB4 and alpha-6-beta-4/CHRNA6-CHRNB4 nAChRs." evidence="2">
    <original>P</original>
    <variation>A</variation>
    <location>
        <position position="27"/>
    </location>
</feature>
<feature type="mutagenesis site" description="Complete loss in inhibitory potency on both alpha-3-beta-4/CHRNA3-CHRNB4 and alpha-6-beta-4/CHRNA6-CHRNB4 nAChRs." evidence="2">
    <original>V</original>
    <variation>A</variation>
    <location>
        <position position="28"/>
    </location>
</feature>
<feature type="mutagenesis site" description="46-fold increase in selectivity for alpha-3-beta-4/CHRNA3-CHRNB4 over alpha-6-beta-4/CHRNA6-CHRNB4 nAChRs. 1.1-fold and 5.2-fold decrease in inhibitory potency on alpha-3-beta-4/CHRNA3-CHRNB4 and alpha-6-beta-4/CHRNA6-CHRNB4 nAChRs, respectively." evidence="2">
    <original>S</original>
    <variation>A</variation>
    <location>
        <position position="30"/>
    </location>
</feature>
<feature type="mutagenesis site" description="Become completely selective for alpha-3-beta-4/CHRNA3-CHRNB4 over alpha-6-beta-4/CHRNA6-CHRNB4 nAChRs. 2-fold decrease in inhibitory potency on alpha-3-beta-4/CHRNA3-CHRNB4 and loss of activity on alpha-6-beta-4/CHRNA6-CHRNB4 nAChRs, respectively." evidence="4">
    <original>S</original>
    <variation>K</variation>
    <location>
        <position position="30"/>
    </location>
</feature>
<feature type="mutagenesis site" description="Complete loss in inhibitory potency on both alpha-3-beta-4/CHRNA3-CHRNB4 and alpha-6-beta-4/CHRNA6-CHRNB4 nAChRs." evidence="2">
    <original>M</original>
    <variation>A</variation>
    <location>
        <position position="32"/>
    </location>
</feature>
<feature type="mutagenesis site" description="Complete loss in inhibitory potency on both alpha-3-beta-4/CHRNA3-CHRNB4 nAChRs." evidence="3">
    <original>M</original>
    <variation>E</variation>
    <variation>K</variation>
    <variation>Q</variation>
    <variation>R</variation>
    <location>
        <position position="32"/>
    </location>
</feature>
<feature type="mutagenesis site" description="21-fold and 1.5-fold decrease in inhibitory potency on alpha-3-beta-4/CHRNA3-CHRNB4 and alpha-6-beta-4/CHRNA6-CHRNB4 nAChRs, respectively." evidence="2">
    <original>M</original>
    <variation>I</variation>
    <location>
        <position position="32"/>
    </location>
</feature>
<feature type="mutagenesis site" description="Important decrease in inhibitory potency on alpha-3-beta-4/CHRNA3-CHRNB4." evidence="3">
    <original>M</original>
    <variation>L</variation>
    <variation>V</variation>
    <location>
        <position position="32"/>
    </location>
</feature>
<feature type="mutagenesis site" description="5-fold and 1.2-fold decrease in inhibitory potency on alpha-3-beta-4/CHRNA3-CHRNB4 and alpha-6-beta-4/CHRNA6-CHRNB4 nAChRs, respectively." evidence="2">
    <original>S</original>
    <variation>A</variation>
    <location>
        <position position="33"/>
    </location>
</feature>
<feature type="mutagenesis site" description="Complete loss in inhibitory potency on both alpha-3-beta-4/CHRNA3-CHRNB4 and alpha-6-beta-4/CHRNA6-CHRNB4 nAChRs." evidence="2">
    <original>P</original>
    <variation>A</variation>
    <location>
        <position position="34"/>
    </location>
</feature>
<feature type="mutagenesis site" description="4.4-fold and 1.3-fold decrease in inhibitory potency on alpha-3-beta-4/CHRNA3-CHRNB4 and alpha-6-beta-4/CHRNA6-CHRNB4 nAChRs, respectively." evidence="2">
    <original>I</original>
    <variation>A</variation>
    <location>
        <position position="35"/>
    </location>
</feature>
<feature type="non-terminal residue">
    <location>
        <position position="1"/>
    </location>
</feature>
<accession>K8DWB5</accession>
<keyword id="KW-0002">3D-structure</keyword>
<keyword id="KW-0008">Acetylcholine receptor inhibiting toxin</keyword>
<keyword id="KW-0027">Amidation</keyword>
<keyword id="KW-1015">Disulfide bond</keyword>
<keyword id="KW-0528">Neurotoxin</keyword>
<keyword id="KW-0629">Postsynaptic neurotoxin</keyword>
<keyword id="KW-0964">Secreted</keyword>
<keyword id="KW-0800">Toxin</keyword>
<name>CA1D_CONTE</name>
<organism>
    <name type="scientific">Conus textile</name>
    <name type="common">Cloth-of-gold cone</name>
    <dbReference type="NCBI Taxonomy" id="6494"/>
    <lineage>
        <taxon>Eukaryota</taxon>
        <taxon>Metazoa</taxon>
        <taxon>Spiralia</taxon>
        <taxon>Lophotrochozoa</taxon>
        <taxon>Mollusca</taxon>
        <taxon>Gastropoda</taxon>
        <taxon>Caenogastropoda</taxon>
        <taxon>Neogastropoda</taxon>
        <taxon>Conoidea</taxon>
        <taxon>Conidae</taxon>
        <taxon>Conus</taxon>
        <taxon>Cylinder</taxon>
    </lineage>
</organism>